<name>CEP72_HUMAN</name>
<accession>Q9P209</accession>
<accession>B4DR26</accession>
<accession>Q9BV03</accession>
<accession>Q9BWM3</accession>
<accession>Q9NVR4</accession>
<organism>
    <name type="scientific">Homo sapiens</name>
    <name type="common">Human</name>
    <dbReference type="NCBI Taxonomy" id="9606"/>
    <lineage>
        <taxon>Eukaryota</taxon>
        <taxon>Metazoa</taxon>
        <taxon>Chordata</taxon>
        <taxon>Craniata</taxon>
        <taxon>Vertebrata</taxon>
        <taxon>Euteleostomi</taxon>
        <taxon>Mammalia</taxon>
        <taxon>Eutheria</taxon>
        <taxon>Euarchontoglires</taxon>
        <taxon>Primates</taxon>
        <taxon>Haplorrhini</taxon>
        <taxon>Catarrhini</taxon>
        <taxon>Hominidae</taxon>
        <taxon>Homo</taxon>
    </lineage>
</organism>
<proteinExistence type="evidence at protein level"/>
<protein>
    <recommendedName>
        <fullName>Centrosomal protein of 72 kDa</fullName>
        <shortName>Cep72</shortName>
    </recommendedName>
</protein>
<comment type="function">
    <text evidence="5 6">Involved in the recruitment of key centrosomal proteins to the centrosome. Provides centrosomal microtubule-nucleation activity on the gamma-tubulin ring complexes (gamma-TuRCs) and has critical roles in forming a focused bipolar spindle, which is needed for proper tension generation between sister chromatids. Required for localization of KIZ, AKAP9 and gamma-tubulin ring complexes (gamma-TuRCs) (PubMed:19536135). Involved in centriole duplication. Required for CDK5RAP22, CEP152, WDR62 and CEP63 centrosomal localization and promotes the centrosomal localization of CDK2 (PubMed:26297806).</text>
</comment>
<comment type="subunit">
    <text evidence="5 6">Interacts with KIZ, PCM1 and CDK5RAP2.</text>
</comment>
<comment type="interaction">
    <interactant intactId="EBI-739498">
        <id>Q9P209</id>
    </interactant>
    <interactant intactId="EBI-708350">
        <id>O15265</id>
        <label>ATXN7</label>
    </interactant>
    <organismsDiffer>false</organismsDiffer>
    <experiments>2</experiments>
</comment>
<comment type="interaction">
    <interactant intactId="EBI-739498">
        <id>Q9P209</id>
    </interactant>
    <interactant intactId="EBI-10258233">
        <id>Q7Z7H3</id>
        <label>CATIP</label>
    </interactant>
    <organismsDiffer>false</organismsDiffer>
    <experiments>5</experiments>
</comment>
<comment type="interaction">
    <interactant intactId="EBI-739498">
        <id>Q9P209</id>
    </interactant>
    <interactant intactId="EBI-308374">
        <id>Q96SN8</id>
        <label>CDK5RAP2</label>
    </interactant>
    <organismsDiffer>false</organismsDiffer>
    <experiments>3</experiments>
</comment>
<comment type="interaction">
    <interactant intactId="EBI-739498">
        <id>Q9P209</id>
    </interactant>
    <interactant intactId="EBI-743375">
        <id>Q9NX63</id>
        <label>CHCHD3</label>
    </interactant>
    <organismsDiffer>false</organismsDiffer>
    <experiments>3</experiments>
</comment>
<comment type="interaction">
    <interactant intactId="EBI-739498">
        <id>Q9P209</id>
    </interactant>
    <interactant intactId="EBI-719941">
        <id>Q3B820</id>
        <label>FAM161A</label>
    </interactant>
    <organismsDiffer>false</organismsDiffer>
    <experiments>3</experiments>
</comment>
<comment type="interaction">
    <interactant intactId="EBI-739498">
        <id>Q9P209</id>
    </interactant>
    <interactant intactId="EBI-6658203">
        <id>Q86YD7</id>
        <label>FAM90A1</label>
    </interactant>
    <organismsDiffer>false</organismsDiffer>
    <experiments>3</experiments>
</comment>
<comment type="interaction">
    <interactant intactId="EBI-739498">
        <id>Q9P209</id>
    </interactant>
    <interactant intactId="EBI-713291">
        <id>P51114</id>
        <label>FXR1</label>
    </interactant>
    <organismsDiffer>false</organismsDiffer>
    <experiments>2</experiments>
</comment>
<comment type="interaction">
    <interactant intactId="EBI-739498">
        <id>Q9P209</id>
    </interactant>
    <interactant intactId="EBI-5916454">
        <id>A6NEM1</id>
        <label>GOLGA6L9</label>
    </interactant>
    <organismsDiffer>false</organismsDiffer>
    <experiments>3</experiments>
</comment>
<comment type="interaction">
    <interactant intactId="EBI-739498">
        <id>Q9P209</id>
    </interactant>
    <interactant intactId="EBI-17178971">
        <id>Q14005-2</id>
        <label>IL16</label>
    </interactant>
    <organismsDiffer>false</organismsDiffer>
    <experiments>3</experiments>
</comment>
<comment type="interaction">
    <interactant intactId="EBI-739498">
        <id>Q9P209</id>
    </interactant>
    <interactant intactId="EBI-6509505">
        <id>Q0VD86</id>
        <label>INCA1</label>
    </interactant>
    <organismsDiffer>false</organismsDiffer>
    <experiments>3</experiments>
</comment>
<comment type="interaction">
    <interactant intactId="EBI-739498">
        <id>Q9P209</id>
    </interactant>
    <interactant intactId="EBI-2554344">
        <id>Q2M2Z5</id>
        <label>KIZ</label>
    </interactant>
    <organismsDiffer>false</organismsDiffer>
    <experiments>3</experiments>
</comment>
<comment type="interaction">
    <interactant intactId="EBI-739498">
        <id>Q9P209</id>
    </interactant>
    <interactant intactId="EBI-739832">
        <id>Q8TBB1</id>
        <label>LNX1</label>
    </interactant>
    <organismsDiffer>false</organismsDiffer>
    <experiments>6</experiments>
</comment>
<comment type="interaction">
    <interactant intactId="EBI-739498">
        <id>Q9P209</id>
    </interactant>
    <interactant intactId="EBI-744782">
        <id>Q9Y5B8</id>
        <label>NME7</label>
    </interactant>
    <organismsDiffer>false</organismsDiffer>
    <experiments>12</experiments>
</comment>
<comment type="interaction">
    <interactant intactId="EBI-739498">
        <id>Q9P209</id>
    </interactant>
    <interactant intactId="EBI-748974">
        <id>Q96CV9</id>
        <label>OPTN</label>
    </interactant>
    <organismsDiffer>false</organismsDiffer>
    <experiments>3</experiments>
</comment>
<comment type="interaction">
    <interactant intactId="EBI-739498">
        <id>Q9P209</id>
    </interactant>
    <interactant intactId="EBI-741421">
        <id>Q15154</id>
        <label>PCM1</label>
    </interactant>
    <organismsDiffer>false</organismsDiffer>
    <experiments>7</experiments>
</comment>
<comment type="interaction">
    <interactant intactId="EBI-739498">
        <id>Q9P209</id>
    </interactant>
    <interactant intactId="EBI-714599">
        <id>Q9Y237</id>
        <label>PIN4</label>
    </interactant>
    <organismsDiffer>false</organismsDiffer>
    <experiments>4</experiments>
</comment>
<comment type="interaction">
    <interactant intactId="EBI-739498">
        <id>Q9P209</id>
    </interactant>
    <interactant intactId="EBI-359352">
        <id>P25786</id>
        <label>PSMA1</label>
    </interactant>
    <organismsDiffer>false</organismsDiffer>
    <experiments>5</experiments>
</comment>
<comment type="interaction">
    <interactant intactId="EBI-739498">
        <id>Q9P209</id>
    </interactant>
    <interactant intactId="EBI-10251550">
        <id>Q6NXQ0</id>
        <label>SFRS2</label>
    </interactant>
    <organismsDiffer>false</organismsDiffer>
    <experiments>3</experiments>
</comment>
<comment type="interaction">
    <interactant intactId="EBI-739498">
        <id>Q9P209</id>
    </interactant>
    <interactant intactId="EBI-413317">
        <id>Q96R06</id>
        <label>SPAG5</label>
    </interactant>
    <organismsDiffer>false</organismsDiffer>
    <experiments>2</experiments>
</comment>
<comment type="interaction">
    <interactant intactId="EBI-739498">
        <id>Q9P209</id>
    </interactant>
    <interactant intactId="EBI-3916986">
        <id>Q86W54</id>
        <label>SPATA24</label>
    </interactant>
    <organismsDiffer>false</organismsDiffer>
    <experiments>5</experiments>
</comment>
<comment type="interaction">
    <interactant intactId="EBI-739498">
        <id>Q9P209</id>
    </interactant>
    <interactant intactId="EBI-745021">
        <id>Q96FJ0</id>
        <label>STAMBPL1</label>
    </interactant>
    <organismsDiffer>false</organismsDiffer>
    <experiments>8</experiments>
</comment>
<comment type="interaction">
    <interactant intactId="EBI-739498">
        <id>Q9P209</id>
    </interactant>
    <interactant intactId="EBI-16429014">
        <id>A0A0S2Z5X4</id>
        <label>ZNF688</label>
    </interactant>
    <organismsDiffer>false</organismsDiffer>
    <experiments>3</experiments>
</comment>
<comment type="subcellular location">
    <subcellularLocation>
        <location evidence="4 5">Cytoplasm</location>
        <location evidence="4 5">Cytoskeleton</location>
        <location evidence="4 5">Microtubule organizing center</location>
        <location evidence="4 5">Centrosome</location>
    </subcellularLocation>
    <subcellularLocation>
        <location evidence="6">Cytoplasm</location>
        <location evidence="6">Cytoskeleton</location>
        <location evidence="6">Microtubule organizing center</location>
        <location evidence="6">Centrosome</location>
        <location evidence="6">Centriolar satellite</location>
    </subcellularLocation>
    <text>Localizes to the centrosome and centrosome-surrounding particles throughout the cell cycle. These particles disappear after microtubules are depolymerized using nocodazole, suggesting that CEP72-associating particles localize in a microtubule- dependent manner.</text>
</comment>
<comment type="alternative products">
    <event type="alternative splicing"/>
    <isoform>
        <id>Q9P209-1</id>
        <name>1</name>
        <sequence type="displayed"/>
    </isoform>
    <isoform>
        <id>Q9P209-2</id>
        <name>2</name>
        <sequence type="described" ref="VSP_037835 VSP_037836"/>
    </isoform>
</comment>
<comment type="similarity">
    <text evidence="8">Belongs to the CEP72 family.</text>
</comment>
<comment type="sequence caution" evidence="8">
    <conflict type="erroneous initiation">
        <sequence resource="EMBL-CDS" id="BAA91685"/>
    </conflict>
</comment>
<comment type="sequence caution" evidence="8">
    <conflict type="erroneous initiation">
        <sequence resource="EMBL-CDS" id="BAA96043"/>
    </conflict>
</comment>
<dbReference type="EMBL" id="AB040952">
    <property type="protein sequence ID" value="BAA96043.1"/>
    <property type="status" value="ALT_INIT"/>
    <property type="molecule type" value="mRNA"/>
</dbReference>
<dbReference type="EMBL" id="AK001427">
    <property type="protein sequence ID" value="BAA91685.1"/>
    <property type="status" value="ALT_INIT"/>
    <property type="molecule type" value="mRNA"/>
</dbReference>
<dbReference type="EMBL" id="AK299072">
    <property type="protein sequence ID" value="BAG61138.1"/>
    <property type="molecule type" value="mRNA"/>
</dbReference>
<dbReference type="EMBL" id="BC000132">
    <property type="protein sequence ID" value="AAH00132.1"/>
    <property type="molecule type" value="mRNA"/>
</dbReference>
<dbReference type="EMBL" id="BC001750">
    <property type="protein sequence ID" value="AAH01750.2"/>
    <property type="molecule type" value="mRNA"/>
</dbReference>
<dbReference type="CCDS" id="CCDS34126.1">
    <molecule id="Q9P209-1"/>
</dbReference>
<dbReference type="RefSeq" id="NP_060610.2">
    <molecule id="Q9P209-1"/>
    <property type="nucleotide sequence ID" value="NM_018140.4"/>
</dbReference>
<dbReference type="RefSeq" id="XP_011512365.1">
    <molecule id="Q9P209-1"/>
    <property type="nucleotide sequence ID" value="XM_011514063.2"/>
</dbReference>
<dbReference type="RefSeq" id="XP_047273319.1">
    <molecule id="Q9P209-1"/>
    <property type="nucleotide sequence ID" value="XM_047417363.1"/>
</dbReference>
<dbReference type="RefSeq" id="XP_047273320.1">
    <molecule id="Q9P209-1"/>
    <property type="nucleotide sequence ID" value="XM_047417364.1"/>
</dbReference>
<dbReference type="RefSeq" id="XP_047273321.1">
    <molecule id="Q9P209-1"/>
    <property type="nucleotide sequence ID" value="XM_047417365.1"/>
</dbReference>
<dbReference type="RefSeq" id="XP_047273322.1">
    <molecule id="Q9P209-1"/>
    <property type="nucleotide sequence ID" value="XM_047417366.1"/>
</dbReference>
<dbReference type="SMR" id="Q9P209"/>
<dbReference type="BioGRID" id="120844">
    <property type="interactions" value="149"/>
</dbReference>
<dbReference type="DIP" id="DIP-54272N"/>
<dbReference type="FunCoup" id="Q9P209">
    <property type="interactions" value="1382"/>
</dbReference>
<dbReference type="IntAct" id="Q9P209">
    <property type="interactions" value="108"/>
</dbReference>
<dbReference type="MINT" id="Q9P209"/>
<dbReference type="STRING" id="9606.ENSP00000264935"/>
<dbReference type="iPTMnet" id="Q9P209"/>
<dbReference type="PhosphoSitePlus" id="Q9P209"/>
<dbReference type="BioMuta" id="CEP72"/>
<dbReference type="DMDM" id="62901504"/>
<dbReference type="jPOST" id="Q9P209"/>
<dbReference type="MassIVE" id="Q9P209"/>
<dbReference type="PaxDb" id="9606-ENSP00000264935"/>
<dbReference type="PeptideAtlas" id="Q9P209"/>
<dbReference type="ProteomicsDB" id="83703">
    <molecule id="Q9P209-1"/>
</dbReference>
<dbReference type="ProteomicsDB" id="83704">
    <molecule id="Q9P209-2"/>
</dbReference>
<dbReference type="Pumba" id="Q9P209"/>
<dbReference type="Antibodypedia" id="22247">
    <property type="antibodies" value="181 antibodies from 24 providers"/>
</dbReference>
<dbReference type="DNASU" id="55722"/>
<dbReference type="Ensembl" id="ENST00000264935.6">
    <molecule id="Q9P209-1"/>
    <property type="protein sequence ID" value="ENSP00000264935.5"/>
    <property type="gene ID" value="ENSG00000112877.8"/>
</dbReference>
<dbReference type="GeneID" id="55722"/>
<dbReference type="KEGG" id="hsa:55722"/>
<dbReference type="MANE-Select" id="ENST00000264935.6">
    <property type="protein sequence ID" value="ENSP00000264935.5"/>
    <property type="RefSeq nucleotide sequence ID" value="NM_018140.4"/>
    <property type="RefSeq protein sequence ID" value="NP_060610.2"/>
</dbReference>
<dbReference type="UCSC" id="uc003jbf.4">
    <molecule id="Q9P209-1"/>
    <property type="organism name" value="human"/>
</dbReference>
<dbReference type="AGR" id="HGNC:25547"/>
<dbReference type="CTD" id="55722"/>
<dbReference type="DisGeNET" id="55722"/>
<dbReference type="GeneCards" id="CEP72"/>
<dbReference type="HGNC" id="HGNC:25547">
    <property type="gene designation" value="CEP72"/>
</dbReference>
<dbReference type="HPA" id="ENSG00000112877">
    <property type="expression patterns" value="Tissue enhanced (testis)"/>
</dbReference>
<dbReference type="MIM" id="616475">
    <property type="type" value="gene"/>
</dbReference>
<dbReference type="neXtProt" id="NX_Q9P209"/>
<dbReference type="OpenTargets" id="ENSG00000112877"/>
<dbReference type="PharmGKB" id="PA142672125"/>
<dbReference type="VEuPathDB" id="HostDB:ENSG00000112877"/>
<dbReference type="eggNOG" id="ENOG502QV2Y">
    <property type="taxonomic scope" value="Eukaryota"/>
</dbReference>
<dbReference type="GeneTree" id="ENSGT00530000063884"/>
<dbReference type="HOGENOM" id="CLU_027497_0_0_1"/>
<dbReference type="InParanoid" id="Q9P209"/>
<dbReference type="OMA" id="HPRAKCT"/>
<dbReference type="OrthoDB" id="676979at2759"/>
<dbReference type="PAN-GO" id="Q9P209">
    <property type="GO annotations" value="4 GO annotations based on evolutionary models"/>
</dbReference>
<dbReference type="PhylomeDB" id="Q9P209"/>
<dbReference type="TreeFam" id="TF338646"/>
<dbReference type="PathwayCommons" id="Q9P209"/>
<dbReference type="Reactome" id="R-HSA-2565942">
    <property type="pathway name" value="Regulation of PLK1 Activity at G2/M Transition"/>
</dbReference>
<dbReference type="Reactome" id="R-HSA-380259">
    <property type="pathway name" value="Loss of Nlp from mitotic centrosomes"/>
</dbReference>
<dbReference type="Reactome" id="R-HSA-380270">
    <property type="pathway name" value="Recruitment of mitotic centrosome proteins and complexes"/>
</dbReference>
<dbReference type="Reactome" id="R-HSA-380284">
    <property type="pathway name" value="Loss of proteins required for interphase microtubule organization from the centrosome"/>
</dbReference>
<dbReference type="Reactome" id="R-HSA-380320">
    <property type="pathway name" value="Recruitment of NuMA to mitotic centrosomes"/>
</dbReference>
<dbReference type="Reactome" id="R-HSA-5620912">
    <property type="pathway name" value="Anchoring of the basal body to the plasma membrane"/>
</dbReference>
<dbReference type="Reactome" id="R-HSA-8854518">
    <property type="pathway name" value="AURKA Activation by TPX2"/>
</dbReference>
<dbReference type="SignaLink" id="Q9P209"/>
<dbReference type="SIGNOR" id="Q9P209"/>
<dbReference type="BioGRID-ORCS" id="55722">
    <property type="hits" value="11 hits in 1163 CRISPR screens"/>
</dbReference>
<dbReference type="CD-CODE" id="8C2F96ED">
    <property type="entry name" value="Centrosome"/>
</dbReference>
<dbReference type="ChiTaRS" id="CEP72">
    <property type="organism name" value="human"/>
</dbReference>
<dbReference type="GeneWiki" id="CEP72"/>
<dbReference type="GenomeRNAi" id="55722"/>
<dbReference type="Pharos" id="Q9P209">
    <property type="development level" value="Tbio"/>
</dbReference>
<dbReference type="PRO" id="PR:Q9P209"/>
<dbReference type="Proteomes" id="UP000005640">
    <property type="component" value="Chromosome 5"/>
</dbReference>
<dbReference type="RNAct" id="Q9P209">
    <property type="molecule type" value="protein"/>
</dbReference>
<dbReference type="Bgee" id="ENSG00000112877">
    <property type="expression patterns" value="Expressed in primordial germ cell in gonad and 101 other cell types or tissues"/>
</dbReference>
<dbReference type="GO" id="GO:0034451">
    <property type="term" value="C:centriolar satellite"/>
    <property type="evidence" value="ECO:0000314"/>
    <property type="project" value="HPA"/>
</dbReference>
<dbReference type="GO" id="GO:0005813">
    <property type="term" value="C:centrosome"/>
    <property type="evidence" value="ECO:0000314"/>
    <property type="project" value="HPA"/>
</dbReference>
<dbReference type="GO" id="GO:0036064">
    <property type="term" value="C:ciliary basal body"/>
    <property type="evidence" value="ECO:0000314"/>
    <property type="project" value="HPA"/>
</dbReference>
<dbReference type="GO" id="GO:0005829">
    <property type="term" value="C:cytosol"/>
    <property type="evidence" value="ECO:0000314"/>
    <property type="project" value="HPA"/>
</dbReference>
<dbReference type="GO" id="GO:0042802">
    <property type="term" value="F:identical protein binding"/>
    <property type="evidence" value="ECO:0007669"/>
    <property type="project" value="Ensembl"/>
</dbReference>
<dbReference type="GO" id="GO:0007099">
    <property type="term" value="P:centriole replication"/>
    <property type="evidence" value="ECO:0000315"/>
    <property type="project" value="UniProtKB"/>
</dbReference>
<dbReference type="GO" id="GO:0033566">
    <property type="term" value="P:gamma-tubulin complex localization"/>
    <property type="evidence" value="ECO:0000315"/>
    <property type="project" value="UniProtKB"/>
</dbReference>
<dbReference type="GO" id="GO:1904779">
    <property type="term" value="P:regulation of protein localization to centrosome"/>
    <property type="evidence" value="ECO:0000315"/>
    <property type="project" value="UniProtKB"/>
</dbReference>
<dbReference type="GO" id="GO:0007051">
    <property type="term" value="P:spindle organization"/>
    <property type="evidence" value="ECO:0000315"/>
    <property type="project" value="UniProtKB"/>
</dbReference>
<dbReference type="FunFam" id="1.10.287.1490:FF:000054">
    <property type="entry name" value="Centrosomal protein of 72 kDa"/>
    <property type="match status" value="1"/>
</dbReference>
<dbReference type="FunFam" id="3.80.10.10:FF:000489">
    <property type="entry name" value="Centrosomal protein of 72 kDa"/>
    <property type="match status" value="1"/>
</dbReference>
<dbReference type="Gene3D" id="1.10.287.1490">
    <property type="match status" value="1"/>
</dbReference>
<dbReference type="Gene3D" id="3.80.10.10">
    <property type="entry name" value="Ribonuclease Inhibitor"/>
    <property type="match status" value="1"/>
</dbReference>
<dbReference type="InterPro" id="IPR055320">
    <property type="entry name" value="CEP72-like"/>
</dbReference>
<dbReference type="InterPro" id="IPR001611">
    <property type="entry name" value="Leu-rich_rpt"/>
</dbReference>
<dbReference type="InterPro" id="IPR003591">
    <property type="entry name" value="Leu-rich_rpt_typical-subtyp"/>
</dbReference>
<dbReference type="InterPro" id="IPR032675">
    <property type="entry name" value="LRR_dom_sf"/>
</dbReference>
<dbReference type="InterPro" id="IPR003603">
    <property type="entry name" value="U2A'_phosphoprotein32A_C"/>
</dbReference>
<dbReference type="PANTHER" id="PTHR23311:SF7">
    <property type="entry name" value="CENTROSOMAL PROTEIN OF 72 KDA"/>
    <property type="match status" value="1"/>
</dbReference>
<dbReference type="PANTHER" id="PTHR23311">
    <property type="entry name" value="HEAT SHOCK REGULATED 2"/>
    <property type="match status" value="1"/>
</dbReference>
<dbReference type="Pfam" id="PF14580">
    <property type="entry name" value="LRR_9"/>
    <property type="match status" value="1"/>
</dbReference>
<dbReference type="SMART" id="SM00369">
    <property type="entry name" value="LRR_TYP"/>
    <property type="match status" value="2"/>
</dbReference>
<dbReference type="SMART" id="SM00446">
    <property type="entry name" value="LRRcap"/>
    <property type="match status" value="1"/>
</dbReference>
<dbReference type="SUPFAM" id="SSF52058">
    <property type="entry name" value="L domain-like"/>
    <property type="match status" value="1"/>
</dbReference>
<dbReference type="PROSITE" id="PS51450">
    <property type="entry name" value="LRR"/>
    <property type="match status" value="2"/>
</dbReference>
<sequence>MARAGPRLVLSEEAVRAKSGLGPHRDLAELQSLSIPGTYQEKITHLGHSLMSLTGLKSLDLSRNSLVSLEGIQYLTALESLNLYYNCISSLAEVFRLHALTELVDVDFRLNPVVKVEPDYRLFVVHLLPKLQQLDDRPVRASERKASRLHFASEDSLDSKESVPASLKEGRPHHPRAKCTEALAKQSLVMDADDEAVLNLIAECEWDLGRPPGSTSFSQKGREADSRGSQESRHLLSPQLVQYQCGDSGKQGRETRRSSCRGCCLEKMPWSQLCGELPPLYGAEPEASRAPRPHTYFTPHPDSMDTEDSASSQKLDLSGEMVPGPLPAPGKCRKRRMPVGRFQTFSDQEGLGCPERTHGSSVPKESLSRQDSSESRNGRTLSQPEASETEEQRSRGVTDTREPSPGSHSALPGKKTALQAALLETLLDLVDRSWGGCRSLHSNEAFLAQARHILSSVEEFTAAQDSSAMVGEDVGSLALESKSLQSRLAEQQQQHAREMSEVTAELHHTHKELDDLRQHLDKSLEENSRLKSLLLSMKKEVKSADTAATLNLQIAGLQTSVKRLCGEIVELKQHLEHYDKIQELTQMLQESHSSLVSTNEHLLQELSQVRAQHRAEVEQMHWSYQELKKTMALFPHSSASHGGCQAC</sequence>
<evidence type="ECO:0000255" key="1"/>
<evidence type="ECO:0000256" key="2">
    <source>
        <dbReference type="SAM" id="MobiDB-lite"/>
    </source>
</evidence>
<evidence type="ECO:0000269" key="3">
    <source>
    </source>
</evidence>
<evidence type="ECO:0000269" key="4">
    <source>
    </source>
</evidence>
<evidence type="ECO:0000269" key="5">
    <source>
    </source>
</evidence>
<evidence type="ECO:0000269" key="6">
    <source>
    </source>
</evidence>
<evidence type="ECO:0000303" key="7">
    <source>
    </source>
</evidence>
<evidence type="ECO:0000305" key="8"/>
<evidence type="ECO:0007744" key="9">
    <source>
    </source>
</evidence>
<evidence type="ECO:0007744" key="10">
    <source>
    </source>
</evidence>
<evidence type="ECO:0007744" key="11">
    <source>
    </source>
</evidence>
<feature type="chain" id="PRO_0000089499" description="Centrosomal protein of 72 kDa">
    <location>
        <begin position="1"/>
        <end position="647"/>
    </location>
</feature>
<feature type="repeat" description="LRR 1">
    <location>
        <begin position="29"/>
        <end position="50"/>
    </location>
</feature>
<feature type="repeat" description="LRR 2">
    <location>
        <begin position="55"/>
        <end position="76"/>
    </location>
</feature>
<feature type="repeat" description="LRR 3">
    <location>
        <begin position="77"/>
        <end position="98"/>
    </location>
</feature>
<feature type="domain" description="LRRCT">
    <location>
        <begin position="111"/>
        <end position="150"/>
    </location>
</feature>
<feature type="region of interest" description="Disordered" evidence="2">
    <location>
        <begin position="152"/>
        <end position="176"/>
    </location>
</feature>
<feature type="region of interest" description="Disordered" evidence="2">
    <location>
        <begin position="211"/>
        <end position="256"/>
    </location>
</feature>
<feature type="region of interest" description="Disordered" evidence="2">
    <location>
        <begin position="285"/>
        <end position="413"/>
    </location>
</feature>
<feature type="coiled-coil region" evidence="1">
    <location>
        <begin position="476"/>
        <end position="620"/>
    </location>
</feature>
<feature type="compositionally biased region" description="Basic and acidic residues" evidence="2">
    <location>
        <begin position="152"/>
        <end position="161"/>
    </location>
</feature>
<feature type="compositionally biased region" description="Basic and acidic residues" evidence="2">
    <location>
        <begin position="220"/>
        <end position="234"/>
    </location>
</feature>
<feature type="compositionally biased region" description="Basic and acidic residues" evidence="2">
    <location>
        <begin position="366"/>
        <end position="377"/>
    </location>
</feature>
<feature type="compositionally biased region" description="Basic and acidic residues" evidence="2">
    <location>
        <begin position="390"/>
        <end position="402"/>
    </location>
</feature>
<feature type="modified residue" description="Phosphoserine" evidence="9 10 11">
    <location>
        <position position="237"/>
    </location>
</feature>
<feature type="modified residue" description="Phosphoserine" evidence="11">
    <location>
        <position position="382"/>
    </location>
</feature>
<feature type="modified residue" description="Phosphoserine" evidence="11">
    <location>
        <position position="404"/>
    </location>
</feature>
<feature type="splice variant" id="VSP_037835" description="In isoform 2." evidence="7">
    <original>PHHPRAKCTEALAKQSLVMDAD</original>
    <variation>IQTSVEPAVGTVPVWGLWEAGP</variation>
    <location>
        <begin position="172"/>
        <end position="193"/>
    </location>
</feature>
<feature type="splice variant" id="VSP_037836" description="In isoform 2." evidence="7">
    <location>
        <begin position="194"/>
        <end position="647"/>
    </location>
</feature>
<feature type="sequence variant" id="VAR_050798" description="In dbSNP:rs869955.">
    <original>P</original>
    <variation>L</variation>
    <location>
        <position position="238"/>
    </location>
</feature>
<feature type="sequence variant" id="VAR_050799" description="In dbSNP:rs12522955.">
    <original>P</original>
    <variation>T</variation>
    <location>
        <position position="412"/>
    </location>
</feature>
<feature type="sequence variant" id="VAR_050800" description="In dbSNP:rs868649." evidence="3">
    <original>T</original>
    <variation>A</variation>
    <location>
        <position position="509"/>
    </location>
</feature>
<feature type="sequence conflict" description="In Ref. 2; BAA91685." evidence="8" ref="2">
    <original>G</original>
    <variation>V</variation>
    <location>
        <position position="566"/>
    </location>
</feature>
<keyword id="KW-0025">Alternative splicing</keyword>
<keyword id="KW-0175">Coiled coil</keyword>
<keyword id="KW-0963">Cytoplasm</keyword>
<keyword id="KW-0206">Cytoskeleton</keyword>
<keyword id="KW-0433">Leucine-rich repeat</keyword>
<keyword id="KW-0597">Phosphoprotein</keyword>
<keyword id="KW-1267">Proteomics identification</keyword>
<keyword id="KW-1185">Reference proteome</keyword>
<keyword id="KW-0677">Repeat</keyword>
<reference key="1">
    <citation type="journal article" date="2000" name="DNA Res.">
        <title>Prediction of the coding sequences of unidentified human genes. XVII. The complete sequences of 100 new cDNA clones from brain which code for large proteins in vitro.</title>
        <authorList>
            <person name="Nagase T."/>
            <person name="Kikuno R."/>
            <person name="Ishikawa K."/>
            <person name="Hirosawa M."/>
            <person name="Ohara O."/>
        </authorList>
    </citation>
    <scope>NUCLEOTIDE SEQUENCE [LARGE SCALE MRNA] (ISOFORM 1)</scope>
    <scope>VARIANT ALA-509</scope>
    <source>
        <tissue>Brain</tissue>
    </source>
</reference>
<reference key="2">
    <citation type="journal article" date="2002" name="DNA Res.">
        <title>Construction of expression-ready cDNA clones for KIAA genes: manual curation of 330 KIAA cDNA clones.</title>
        <authorList>
            <person name="Nakajima D."/>
            <person name="Okazaki N."/>
            <person name="Yamakawa H."/>
            <person name="Kikuno R."/>
            <person name="Ohara O."/>
            <person name="Nagase T."/>
        </authorList>
    </citation>
    <scope>SEQUENCE REVISION</scope>
</reference>
<reference key="3">
    <citation type="journal article" date="2004" name="Nat. Genet.">
        <title>Complete sequencing and characterization of 21,243 full-length human cDNAs.</title>
        <authorList>
            <person name="Ota T."/>
            <person name="Suzuki Y."/>
            <person name="Nishikawa T."/>
            <person name="Otsuki T."/>
            <person name="Sugiyama T."/>
            <person name="Irie R."/>
            <person name="Wakamatsu A."/>
            <person name="Hayashi K."/>
            <person name="Sato H."/>
            <person name="Nagai K."/>
            <person name="Kimura K."/>
            <person name="Makita H."/>
            <person name="Sekine M."/>
            <person name="Obayashi M."/>
            <person name="Nishi T."/>
            <person name="Shibahara T."/>
            <person name="Tanaka T."/>
            <person name="Ishii S."/>
            <person name="Yamamoto J."/>
            <person name="Saito K."/>
            <person name="Kawai Y."/>
            <person name="Isono Y."/>
            <person name="Nakamura Y."/>
            <person name="Nagahari K."/>
            <person name="Murakami K."/>
            <person name="Yasuda T."/>
            <person name="Iwayanagi T."/>
            <person name="Wagatsuma M."/>
            <person name="Shiratori A."/>
            <person name="Sudo H."/>
            <person name="Hosoiri T."/>
            <person name="Kaku Y."/>
            <person name="Kodaira H."/>
            <person name="Kondo H."/>
            <person name="Sugawara M."/>
            <person name="Takahashi M."/>
            <person name="Kanda K."/>
            <person name="Yokoi T."/>
            <person name="Furuya T."/>
            <person name="Kikkawa E."/>
            <person name="Omura Y."/>
            <person name="Abe K."/>
            <person name="Kamihara K."/>
            <person name="Katsuta N."/>
            <person name="Sato K."/>
            <person name="Tanikawa M."/>
            <person name="Yamazaki M."/>
            <person name="Ninomiya K."/>
            <person name="Ishibashi T."/>
            <person name="Yamashita H."/>
            <person name="Murakawa K."/>
            <person name="Fujimori K."/>
            <person name="Tanai H."/>
            <person name="Kimata M."/>
            <person name="Watanabe M."/>
            <person name="Hiraoka S."/>
            <person name="Chiba Y."/>
            <person name="Ishida S."/>
            <person name="Ono Y."/>
            <person name="Takiguchi S."/>
            <person name="Watanabe S."/>
            <person name="Yosida M."/>
            <person name="Hotuta T."/>
            <person name="Kusano J."/>
            <person name="Kanehori K."/>
            <person name="Takahashi-Fujii A."/>
            <person name="Hara H."/>
            <person name="Tanase T.-O."/>
            <person name="Nomura Y."/>
            <person name="Togiya S."/>
            <person name="Komai F."/>
            <person name="Hara R."/>
            <person name="Takeuchi K."/>
            <person name="Arita M."/>
            <person name="Imose N."/>
            <person name="Musashino K."/>
            <person name="Yuuki H."/>
            <person name="Oshima A."/>
            <person name="Sasaki N."/>
            <person name="Aotsuka S."/>
            <person name="Yoshikawa Y."/>
            <person name="Matsunawa H."/>
            <person name="Ichihara T."/>
            <person name="Shiohata N."/>
            <person name="Sano S."/>
            <person name="Moriya S."/>
            <person name="Momiyama H."/>
            <person name="Satoh N."/>
            <person name="Takami S."/>
            <person name="Terashima Y."/>
            <person name="Suzuki O."/>
            <person name="Nakagawa S."/>
            <person name="Senoh A."/>
            <person name="Mizoguchi H."/>
            <person name="Goto Y."/>
            <person name="Shimizu F."/>
            <person name="Wakebe H."/>
            <person name="Hishigaki H."/>
            <person name="Watanabe T."/>
            <person name="Sugiyama A."/>
            <person name="Takemoto M."/>
            <person name="Kawakami B."/>
            <person name="Yamazaki M."/>
            <person name="Watanabe K."/>
            <person name="Kumagai A."/>
            <person name="Itakura S."/>
            <person name="Fukuzumi Y."/>
            <person name="Fujimori Y."/>
            <person name="Komiyama M."/>
            <person name="Tashiro H."/>
            <person name="Tanigami A."/>
            <person name="Fujiwara T."/>
            <person name="Ono T."/>
            <person name="Yamada K."/>
            <person name="Fujii Y."/>
            <person name="Ozaki K."/>
            <person name="Hirao M."/>
            <person name="Ohmori Y."/>
            <person name="Kawabata A."/>
            <person name="Hikiji T."/>
            <person name="Kobatake N."/>
            <person name="Inagaki H."/>
            <person name="Ikema Y."/>
            <person name="Okamoto S."/>
            <person name="Okitani R."/>
            <person name="Kawakami T."/>
            <person name="Noguchi S."/>
            <person name="Itoh T."/>
            <person name="Shigeta K."/>
            <person name="Senba T."/>
            <person name="Matsumura K."/>
            <person name="Nakajima Y."/>
            <person name="Mizuno T."/>
            <person name="Morinaga M."/>
            <person name="Sasaki M."/>
            <person name="Togashi T."/>
            <person name="Oyama M."/>
            <person name="Hata H."/>
            <person name="Watanabe M."/>
            <person name="Komatsu T."/>
            <person name="Mizushima-Sugano J."/>
            <person name="Satoh T."/>
            <person name="Shirai Y."/>
            <person name="Takahashi Y."/>
            <person name="Nakagawa K."/>
            <person name="Okumura K."/>
            <person name="Nagase T."/>
            <person name="Nomura N."/>
            <person name="Kikuchi H."/>
            <person name="Masuho Y."/>
            <person name="Yamashita R."/>
            <person name="Nakai K."/>
            <person name="Yada T."/>
            <person name="Nakamura Y."/>
            <person name="Ohara O."/>
            <person name="Isogai T."/>
            <person name="Sugano S."/>
        </authorList>
    </citation>
    <scope>NUCLEOTIDE SEQUENCE [LARGE SCALE MRNA] (ISOFORM 2)</scope>
    <scope>NUCLEOTIDE SEQUENCE [LARGE SCALE MRNA] OF 93-647 (ISOFORM 1)</scope>
    <source>
        <tissue>Teratocarcinoma</tissue>
    </source>
</reference>
<reference key="4">
    <citation type="journal article" date="2004" name="Genome Res.">
        <title>The status, quality, and expansion of the NIH full-length cDNA project: the Mammalian Gene Collection (MGC).</title>
        <authorList>
            <consortium name="The MGC Project Team"/>
        </authorList>
    </citation>
    <scope>NUCLEOTIDE SEQUENCE [LARGE SCALE MRNA] (ISOFORM 1)</scope>
    <source>
        <tissue>Lung</tissue>
        <tissue>Placenta</tissue>
    </source>
</reference>
<reference key="5">
    <citation type="journal article" date="2003" name="Nature">
        <title>Proteomic characterization of the human centrosome by protein correlation profiling.</title>
        <authorList>
            <person name="Andersen J.S."/>
            <person name="Wilkinson C.J."/>
            <person name="Mayor T."/>
            <person name="Mortensen P."/>
            <person name="Nigg E.A."/>
            <person name="Mann M."/>
        </authorList>
    </citation>
    <scope>IDENTIFICATION BY MASS SPECTROMETRY</scope>
    <scope>SUBCELLULAR LOCATION [LARGE SCALE ANALYSIS]</scope>
    <source>
        <tissue>Lymphoblast</tissue>
    </source>
</reference>
<reference key="6">
    <citation type="journal article" date="2008" name="Proc. Natl. Acad. Sci. U.S.A.">
        <title>A quantitative atlas of mitotic phosphorylation.</title>
        <authorList>
            <person name="Dephoure N."/>
            <person name="Zhou C."/>
            <person name="Villen J."/>
            <person name="Beausoleil S.A."/>
            <person name="Bakalarski C.E."/>
            <person name="Elledge S.J."/>
            <person name="Gygi S.P."/>
        </authorList>
    </citation>
    <scope>PHOSPHORYLATION [LARGE SCALE ANALYSIS] AT SER-237</scope>
    <scope>IDENTIFICATION BY MASS SPECTROMETRY [LARGE SCALE ANALYSIS]</scope>
    <source>
        <tissue>Cervix carcinoma</tissue>
    </source>
</reference>
<reference key="7">
    <citation type="journal article" date="2009" name="EMBO J.">
        <title>Cep72 regulates the localization of key centrosomal proteins and proper bipolar spindle formation.</title>
        <authorList>
            <person name="Oshimori N."/>
            <person name="Li X."/>
            <person name="Ohsugi M."/>
            <person name="Yamamoto T."/>
        </authorList>
    </citation>
    <scope>FUNCTION</scope>
    <scope>SUBCELLULAR LOCATION</scope>
    <scope>INTERACTION WITH KIZ</scope>
</reference>
<reference key="8">
    <citation type="journal article" date="2009" name="Sci. Signal.">
        <title>Quantitative phosphoproteomic analysis of T cell receptor signaling reveals system-wide modulation of protein-protein interactions.</title>
        <authorList>
            <person name="Mayya V."/>
            <person name="Lundgren D.H."/>
            <person name="Hwang S.-I."/>
            <person name="Rezaul K."/>
            <person name="Wu L."/>
            <person name="Eng J.K."/>
            <person name="Rodionov V."/>
            <person name="Han D.K."/>
        </authorList>
    </citation>
    <scope>IDENTIFICATION BY MASS SPECTROMETRY [LARGE SCALE ANALYSIS]</scope>
    <source>
        <tissue>Leukemic T-cell</tissue>
    </source>
</reference>
<reference key="9">
    <citation type="journal article" date="2010" name="Sci. Signal.">
        <title>Quantitative phosphoproteomics reveals widespread full phosphorylation site occupancy during mitosis.</title>
        <authorList>
            <person name="Olsen J.V."/>
            <person name="Vermeulen M."/>
            <person name="Santamaria A."/>
            <person name="Kumar C."/>
            <person name="Miller M.L."/>
            <person name="Jensen L.J."/>
            <person name="Gnad F."/>
            <person name="Cox J."/>
            <person name="Jensen T.S."/>
            <person name="Nigg E.A."/>
            <person name="Brunak S."/>
            <person name="Mann M."/>
        </authorList>
    </citation>
    <scope>PHOSPHORYLATION [LARGE SCALE ANALYSIS] AT SER-237</scope>
    <scope>IDENTIFICATION BY MASS SPECTROMETRY [LARGE SCALE ANALYSIS]</scope>
    <source>
        <tissue>Cervix carcinoma</tissue>
    </source>
</reference>
<reference key="10">
    <citation type="journal article" date="2013" name="J. Proteome Res.">
        <title>Toward a comprehensive characterization of a human cancer cell phosphoproteome.</title>
        <authorList>
            <person name="Zhou H."/>
            <person name="Di Palma S."/>
            <person name="Preisinger C."/>
            <person name="Peng M."/>
            <person name="Polat A.N."/>
            <person name="Heck A.J."/>
            <person name="Mohammed S."/>
        </authorList>
    </citation>
    <scope>PHOSPHORYLATION [LARGE SCALE ANALYSIS] AT SER-237; SER-382 AND SER-404</scope>
    <scope>IDENTIFICATION BY MASS SPECTROMETRY [LARGE SCALE ANALYSIS]</scope>
    <source>
        <tissue>Cervix carcinoma</tissue>
        <tissue>Erythroleukemia</tissue>
    </source>
</reference>
<reference key="11">
    <citation type="journal article" date="2015" name="Elife">
        <title>Centriolar satellites assemble centrosomal microcephaly proteins to recruit CDK2 and promote centriole duplication.</title>
        <authorList>
            <person name="Kodani A."/>
            <person name="Yu T.W."/>
            <person name="Johnson J.R."/>
            <person name="Jayaraman D."/>
            <person name="Johnson T.L."/>
            <person name="Al-Gazali L."/>
            <person name="Sztriha L."/>
            <person name="Partlow J.N."/>
            <person name="Kim H."/>
            <person name="Krup A.L."/>
            <person name="Dammermann A."/>
            <person name="Krogan N."/>
            <person name="Walsh C.A."/>
            <person name="Reiter J.F."/>
        </authorList>
    </citation>
    <scope>FUNCTION</scope>
    <scope>SUBCELLULAR LOCATION</scope>
    <scope>INTERACTION WITH CDK5RAP2 AND PCM1</scope>
</reference>
<reference key="12">
    <citation type="journal article" date="2015" name="Proteomics">
        <title>N-terminome analysis of the human mitochondrial proteome.</title>
        <authorList>
            <person name="Vaca Jacome A.S."/>
            <person name="Rabilloud T."/>
            <person name="Schaeffer-Reiss C."/>
            <person name="Rompais M."/>
            <person name="Ayoub D."/>
            <person name="Lane L."/>
            <person name="Bairoch A."/>
            <person name="Van Dorsselaer A."/>
            <person name="Carapito C."/>
        </authorList>
    </citation>
    <scope>IDENTIFICATION BY MASS SPECTROMETRY [LARGE SCALE ANALYSIS]</scope>
</reference>
<gene>
    <name type="primary">CEP72</name>
    <name type="synonym">KIAA1519</name>
</gene>